<keyword id="KW-0067">ATP-binding</keyword>
<keyword id="KW-0997">Cell inner membrane</keyword>
<keyword id="KW-1003">Cell membrane</keyword>
<keyword id="KW-0472">Membrane</keyword>
<keyword id="KW-0547">Nucleotide-binding</keyword>
<keyword id="KW-0677">Repeat</keyword>
<keyword id="KW-0762">Sugar transport</keyword>
<keyword id="KW-1278">Translocase</keyword>
<keyword id="KW-0813">Transport</keyword>
<accession>Q39JR1</accession>
<sequence length="503" mass="55178">MSAALRFDNIGKVFPGVRALDGISFDVHAGEVHGLMGENGAGKSTLLKILGGEYQPDAGSVLVDGQPVQFASAAASIAAGIAVIHQELQYVPDLTVAENLLLGRLPNAFGWVRKREAKRYVRERLAAMGVDLDPDAKLGRLSIAQRQMVEICKALMRNARVIALDEPTSSLSHRETEVLFKLVDDLRAQGRALIYISHRMDEIYRLCNACTIFRDGRKIASHESLADVPRERLVAEMVGREISDIYHYAPRALGDVRFAAEGIDGPALREPASFSVRAGEIVGFFGLVGAGRSELMRLVYGADHRRAGVLTLDGARIDVKRTGDAIRHGIVLCPEDRKEEGIIAIASVAENINISCRRHSLRAGLFINRKAESETADRFIQRLKIKTPNRRQKIRFLSGGNQQKAILSRWLAEPDLKVVILDEPTRGIDVGAKHEIYDVIYRLAERGCAIVMVSSELPEVLGVSDRIVVMREGRIAGELPREQANEHAVLSLALPQTSAVEAA</sequence>
<comment type="function">
    <text evidence="1">Part of the ABC transporter complex AraFGH involved in arabinose import. Responsible for energy coupling to the transport system.</text>
</comment>
<comment type="catalytic activity">
    <reaction evidence="1">
        <text>L-arabinose(out) + ATP + H2O = L-arabinose(in) + ADP + phosphate + H(+)</text>
        <dbReference type="Rhea" id="RHEA:30007"/>
        <dbReference type="ChEBI" id="CHEBI:15377"/>
        <dbReference type="ChEBI" id="CHEBI:15378"/>
        <dbReference type="ChEBI" id="CHEBI:17535"/>
        <dbReference type="ChEBI" id="CHEBI:30616"/>
        <dbReference type="ChEBI" id="CHEBI:43474"/>
        <dbReference type="ChEBI" id="CHEBI:456216"/>
        <dbReference type="EC" id="7.5.2.12"/>
    </reaction>
</comment>
<comment type="subunit">
    <text evidence="1">The complex is composed of two ATP-binding proteins (AraG), two transmembrane proteins (AraH) and a solute-binding protein (AraF).</text>
</comment>
<comment type="subcellular location">
    <subcellularLocation>
        <location evidence="1">Cell inner membrane</location>
        <topology evidence="1">Peripheral membrane protein</topology>
    </subcellularLocation>
</comment>
<comment type="similarity">
    <text evidence="1">Belongs to the ABC transporter superfamily. Arabinose importer (TC 3.A.1.2.2) family.</text>
</comment>
<reference key="1">
    <citation type="submission" date="2005-10" db="EMBL/GenBank/DDBJ databases">
        <title>Complete sequence of chromosome 1 of Burkholderia sp. 383.</title>
        <authorList>
            <consortium name="US DOE Joint Genome Institute"/>
            <person name="Copeland A."/>
            <person name="Lucas S."/>
            <person name="Lapidus A."/>
            <person name="Barry K."/>
            <person name="Detter J.C."/>
            <person name="Glavina T."/>
            <person name="Hammon N."/>
            <person name="Israni S."/>
            <person name="Pitluck S."/>
            <person name="Chain P."/>
            <person name="Malfatti S."/>
            <person name="Shin M."/>
            <person name="Vergez L."/>
            <person name="Schmutz J."/>
            <person name="Larimer F."/>
            <person name="Land M."/>
            <person name="Kyrpides N."/>
            <person name="Lykidis A."/>
            <person name="Richardson P."/>
        </authorList>
    </citation>
    <scope>NUCLEOTIDE SEQUENCE [LARGE SCALE GENOMIC DNA]</scope>
    <source>
        <strain>ATCC 17760 / DSM 23089 / LMG 22485 / NCIMB 9086 / R18194 / 383</strain>
    </source>
</reference>
<organism>
    <name type="scientific">Burkholderia lata (strain ATCC 17760 / DSM 23089 / LMG 22485 / NCIMB 9086 / R18194 / 383)</name>
    <dbReference type="NCBI Taxonomy" id="482957"/>
    <lineage>
        <taxon>Bacteria</taxon>
        <taxon>Pseudomonadati</taxon>
        <taxon>Pseudomonadota</taxon>
        <taxon>Betaproteobacteria</taxon>
        <taxon>Burkholderiales</taxon>
        <taxon>Burkholderiaceae</taxon>
        <taxon>Burkholderia</taxon>
        <taxon>Burkholderia cepacia complex</taxon>
    </lineage>
</organism>
<gene>
    <name evidence="1" type="primary">araG1</name>
    <name type="ordered locus">Bcep18194_A3704</name>
</gene>
<name>ARAG1_BURL3</name>
<evidence type="ECO:0000255" key="1">
    <source>
        <dbReference type="HAMAP-Rule" id="MF_01721"/>
    </source>
</evidence>
<proteinExistence type="inferred from homology"/>
<dbReference type="EC" id="7.5.2.12" evidence="1"/>
<dbReference type="EMBL" id="CP000151">
    <property type="protein sequence ID" value="ABB07305.1"/>
    <property type="molecule type" value="Genomic_DNA"/>
</dbReference>
<dbReference type="RefSeq" id="WP_011350895.1">
    <property type="nucleotide sequence ID" value="NC_007510.1"/>
</dbReference>
<dbReference type="SMR" id="Q39JR1"/>
<dbReference type="GeneID" id="45093618"/>
<dbReference type="KEGG" id="bur:Bcep18194_A3704"/>
<dbReference type="PATRIC" id="fig|482957.22.peg.561"/>
<dbReference type="HOGENOM" id="CLU_000604_92_3_4"/>
<dbReference type="Proteomes" id="UP000002705">
    <property type="component" value="Chromosome 1"/>
</dbReference>
<dbReference type="GO" id="GO:0005886">
    <property type="term" value="C:plasma membrane"/>
    <property type="evidence" value="ECO:0007669"/>
    <property type="project" value="UniProtKB-SubCell"/>
</dbReference>
<dbReference type="GO" id="GO:0015612">
    <property type="term" value="F:ABC-type L-arabinose transporter activity"/>
    <property type="evidence" value="ECO:0007669"/>
    <property type="project" value="UniProtKB-EC"/>
</dbReference>
<dbReference type="GO" id="GO:0005524">
    <property type="term" value="F:ATP binding"/>
    <property type="evidence" value="ECO:0007669"/>
    <property type="project" value="UniProtKB-KW"/>
</dbReference>
<dbReference type="GO" id="GO:0016887">
    <property type="term" value="F:ATP hydrolysis activity"/>
    <property type="evidence" value="ECO:0007669"/>
    <property type="project" value="InterPro"/>
</dbReference>
<dbReference type="CDD" id="cd03216">
    <property type="entry name" value="ABC_Carb_Monos_I"/>
    <property type="match status" value="1"/>
</dbReference>
<dbReference type="CDD" id="cd03215">
    <property type="entry name" value="ABC_Carb_Monos_II"/>
    <property type="match status" value="1"/>
</dbReference>
<dbReference type="FunFam" id="3.40.50.300:FF:000127">
    <property type="entry name" value="Ribose import ATP-binding protein RbsA"/>
    <property type="match status" value="1"/>
</dbReference>
<dbReference type="Gene3D" id="3.40.50.300">
    <property type="entry name" value="P-loop containing nucleotide triphosphate hydrolases"/>
    <property type="match status" value="2"/>
</dbReference>
<dbReference type="InterPro" id="IPR003593">
    <property type="entry name" value="AAA+_ATPase"/>
</dbReference>
<dbReference type="InterPro" id="IPR050107">
    <property type="entry name" value="ABC_carbohydrate_import_ATPase"/>
</dbReference>
<dbReference type="InterPro" id="IPR003439">
    <property type="entry name" value="ABC_transporter-like_ATP-bd"/>
</dbReference>
<dbReference type="InterPro" id="IPR017871">
    <property type="entry name" value="ABC_transporter-like_CS"/>
</dbReference>
<dbReference type="InterPro" id="IPR027417">
    <property type="entry name" value="P-loop_NTPase"/>
</dbReference>
<dbReference type="NCBIfam" id="NF008442">
    <property type="entry name" value="PRK11288.1"/>
    <property type="match status" value="1"/>
</dbReference>
<dbReference type="PANTHER" id="PTHR43790:SF6">
    <property type="entry name" value="ARABINOSE IMPORT ATP-BINDING PROTEIN ARAG"/>
    <property type="match status" value="1"/>
</dbReference>
<dbReference type="PANTHER" id="PTHR43790">
    <property type="entry name" value="CARBOHYDRATE TRANSPORT ATP-BINDING PROTEIN MG119-RELATED"/>
    <property type="match status" value="1"/>
</dbReference>
<dbReference type="Pfam" id="PF00005">
    <property type="entry name" value="ABC_tran"/>
    <property type="match status" value="2"/>
</dbReference>
<dbReference type="SMART" id="SM00382">
    <property type="entry name" value="AAA"/>
    <property type="match status" value="2"/>
</dbReference>
<dbReference type="SUPFAM" id="SSF52540">
    <property type="entry name" value="P-loop containing nucleoside triphosphate hydrolases"/>
    <property type="match status" value="2"/>
</dbReference>
<dbReference type="PROSITE" id="PS00211">
    <property type="entry name" value="ABC_TRANSPORTER_1"/>
    <property type="match status" value="1"/>
</dbReference>
<dbReference type="PROSITE" id="PS50893">
    <property type="entry name" value="ABC_TRANSPORTER_2"/>
    <property type="match status" value="2"/>
</dbReference>
<dbReference type="PROSITE" id="PS51268">
    <property type="entry name" value="ARAG"/>
    <property type="match status" value="1"/>
</dbReference>
<protein>
    <recommendedName>
        <fullName evidence="1">Arabinose import ATP-binding protein AraG 1</fullName>
        <ecNumber evidence="1">7.5.2.12</ecNumber>
    </recommendedName>
</protein>
<feature type="chain" id="PRO_0000270460" description="Arabinose import ATP-binding protein AraG 1">
    <location>
        <begin position="1"/>
        <end position="503"/>
    </location>
</feature>
<feature type="domain" description="ABC transporter 1" evidence="1">
    <location>
        <begin position="5"/>
        <end position="240"/>
    </location>
</feature>
<feature type="domain" description="ABC transporter 2" evidence="1">
    <location>
        <begin position="251"/>
        <end position="497"/>
    </location>
</feature>
<feature type="binding site" evidence="1">
    <location>
        <begin position="37"/>
        <end position="44"/>
    </location>
    <ligand>
        <name>ATP</name>
        <dbReference type="ChEBI" id="CHEBI:30616"/>
    </ligand>
</feature>